<organism>
    <name type="scientific">Shewanella sp. (strain MR-4)</name>
    <dbReference type="NCBI Taxonomy" id="60480"/>
    <lineage>
        <taxon>Bacteria</taxon>
        <taxon>Pseudomonadati</taxon>
        <taxon>Pseudomonadota</taxon>
        <taxon>Gammaproteobacteria</taxon>
        <taxon>Alteromonadales</taxon>
        <taxon>Shewanellaceae</taxon>
        <taxon>Shewanella</taxon>
    </lineage>
</organism>
<keyword id="KW-0963">Cytoplasm</keyword>
<keyword id="KW-0488">Methylation</keyword>
<keyword id="KW-0648">Protein biosynthesis</keyword>
<dbReference type="EMBL" id="CP000446">
    <property type="protein sequence ID" value="ABI40239.1"/>
    <property type="molecule type" value="Genomic_DNA"/>
</dbReference>
<dbReference type="RefSeq" id="WP_011623911.1">
    <property type="nucleotide sequence ID" value="NC_008321.1"/>
</dbReference>
<dbReference type="SMR" id="Q0HFC8"/>
<dbReference type="KEGG" id="she:Shewmr4_3169"/>
<dbReference type="HOGENOM" id="CLU_036856_0_1_6"/>
<dbReference type="GO" id="GO:0005737">
    <property type="term" value="C:cytoplasm"/>
    <property type="evidence" value="ECO:0007669"/>
    <property type="project" value="UniProtKB-SubCell"/>
</dbReference>
<dbReference type="GO" id="GO:0016149">
    <property type="term" value="F:translation release factor activity, codon specific"/>
    <property type="evidence" value="ECO:0007669"/>
    <property type="project" value="UniProtKB-UniRule"/>
</dbReference>
<dbReference type="FunFam" id="3.30.160.20:FF:000004">
    <property type="entry name" value="Peptide chain release factor 1"/>
    <property type="match status" value="1"/>
</dbReference>
<dbReference type="FunFam" id="3.30.70.1660:FF:000002">
    <property type="entry name" value="Peptide chain release factor 1"/>
    <property type="match status" value="1"/>
</dbReference>
<dbReference type="FunFam" id="3.30.70.1660:FF:000004">
    <property type="entry name" value="Peptide chain release factor 1"/>
    <property type="match status" value="1"/>
</dbReference>
<dbReference type="Gene3D" id="3.30.160.20">
    <property type="match status" value="1"/>
</dbReference>
<dbReference type="Gene3D" id="3.30.70.1660">
    <property type="match status" value="2"/>
</dbReference>
<dbReference type="Gene3D" id="6.10.140.1950">
    <property type="match status" value="1"/>
</dbReference>
<dbReference type="HAMAP" id="MF_00093">
    <property type="entry name" value="Rel_fac_1"/>
    <property type="match status" value="1"/>
</dbReference>
<dbReference type="InterPro" id="IPR005139">
    <property type="entry name" value="PCRF"/>
</dbReference>
<dbReference type="InterPro" id="IPR000352">
    <property type="entry name" value="Pep_chain_release_fac_I"/>
</dbReference>
<dbReference type="InterPro" id="IPR045853">
    <property type="entry name" value="Pep_chain_release_fac_I_sf"/>
</dbReference>
<dbReference type="InterPro" id="IPR050057">
    <property type="entry name" value="Prokaryotic/Mito_RF"/>
</dbReference>
<dbReference type="InterPro" id="IPR004373">
    <property type="entry name" value="RF-1"/>
</dbReference>
<dbReference type="NCBIfam" id="TIGR00019">
    <property type="entry name" value="prfA"/>
    <property type="match status" value="1"/>
</dbReference>
<dbReference type="NCBIfam" id="NF001859">
    <property type="entry name" value="PRK00591.1"/>
    <property type="match status" value="1"/>
</dbReference>
<dbReference type="PANTHER" id="PTHR43804">
    <property type="entry name" value="LD18447P"/>
    <property type="match status" value="1"/>
</dbReference>
<dbReference type="PANTHER" id="PTHR43804:SF7">
    <property type="entry name" value="LD18447P"/>
    <property type="match status" value="1"/>
</dbReference>
<dbReference type="Pfam" id="PF03462">
    <property type="entry name" value="PCRF"/>
    <property type="match status" value="1"/>
</dbReference>
<dbReference type="Pfam" id="PF00472">
    <property type="entry name" value="RF-1"/>
    <property type="match status" value="1"/>
</dbReference>
<dbReference type="SMART" id="SM00937">
    <property type="entry name" value="PCRF"/>
    <property type="match status" value="1"/>
</dbReference>
<dbReference type="SUPFAM" id="SSF75620">
    <property type="entry name" value="Release factor"/>
    <property type="match status" value="1"/>
</dbReference>
<dbReference type="PROSITE" id="PS00745">
    <property type="entry name" value="RF_PROK_I"/>
    <property type="match status" value="1"/>
</dbReference>
<feature type="chain" id="PRO_0000263349" description="Peptide chain release factor 1">
    <location>
        <begin position="1"/>
        <end position="363"/>
    </location>
</feature>
<feature type="region of interest" description="Disordered" evidence="2">
    <location>
        <begin position="284"/>
        <end position="305"/>
    </location>
</feature>
<feature type="compositionally biased region" description="Basic and acidic residues" evidence="2">
    <location>
        <begin position="284"/>
        <end position="296"/>
    </location>
</feature>
<feature type="modified residue" description="N5-methylglutamine" evidence="1">
    <location>
        <position position="237"/>
    </location>
</feature>
<reference key="1">
    <citation type="submission" date="2006-08" db="EMBL/GenBank/DDBJ databases">
        <title>Complete sequence of Shewanella sp. MR-4.</title>
        <authorList>
            <consortium name="US DOE Joint Genome Institute"/>
            <person name="Copeland A."/>
            <person name="Lucas S."/>
            <person name="Lapidus A."/>
            <person name="Barry K."/>
            <person name="Detter J.C."/>
            <person name="Glavina del Rio T."/>
            <person name="Hammon N."/>
            <person name="Israni S."/>
            <person name="Dalin E."/>
            <person name="Tice H."/>
            <person name="Pitluck S."/>
            <person name="Kiss H."/>
            <person name="Brettin T."/>
            <person name="Bruce D."/>
            <person name="Han C."/>
            <person name="Tapia R."/>
            <person name="Gilna P."/>
            <person name="Schmutz J."/>
            <person name="Larimer F."/>
            <person name="Land M."/>
            <person name="Hauser L."/>
            <person name="Kyrpides N."/>
            <person name="Mikhailova N."/>
            <person name="Nealson K."/>
            <person name="Konstantinidis K."/>
            <person name="Klappenbach J."/>
            <person name="Tiedje J."/>
            <person name="Richardson P."/>
        </authorList>
    </citation>
    <scope>NUCLEOTIDE SEQUENCE [LARGE SCALE GENOMIC DNA]</scope>
    <source>
        <strain>MR-4</strain>
    </source>
</reference>
<proteinExistence type="inferred from homology"/>
<comment type="function">
    <text evidence="1">Peptide chain release factor 1 directs the termination of translation in response to the peptide chain termination codons UAG and UAA.</text>
</comment>
<comment type="subcellular location">
    <subcellularLocation>
        <location evidence="1">Cytoplasm</location>
    </subcellularLocation>
</comment>
<comment type="PTM">
    <text evidence="1">Methylated by PrmC. Methylation increases the termination efficiency of RF1.</text>
</comment>
<comment type="similarity">
    <text evidence="1">Belongs to the prokaryotic/mitochondrial release factor family.</text>
</comment>
<sequence>MKESVIRKLEGLLERNEEVLALLGDASVIADQERFRALSKEYSQLEEVVAGFKAYQQALADLESAKEMLEEDDAEMREMAQEEIKAAKAELERLEAELQILLLPKDPNDDTNAFIEIRAGAGGDEAAIFAGDLFRMYSRYAEANRWQLEIMSSNEGEHGGFKEIIVKVSGEGAYGKLKFESGGHRVQRVPETESQGRVHTSAVTVVVMHEVPEAEAISINPADLKVDTFRSSGAGGQHVNKTDSAIRITHIPTGIVVECQDQRSQHKNRAQAMSVLAARIQAVEDEKRRSAEESTRRSLVASGDRSERVRTYNFPQGRVSEHRINLTLYRLNEVMEGDLDAILGPLMQEHQADLLAALADEQG</sequence>
<protein>
    <recommendedName>
        <fullName evidence="1">Peptide chain release factor 1</fullName>
        <shortName evidence="1">RF-1</shortName>
    </recommendedName>
</protein>
<gene>
    <name evidence="1" type="primary">prfA</name>
    <name type="ordered locus">Shewmr4_3169</name>
</gene>
<accession>Q0HFC8</accession>
<evidence type="ECO:0000255" key="1">
    <source>
        <dbReference type="HAMAP-Rule" id="MF_00093"/>
    </source>
</evidence>
<evidence type="ECO:0000256" key="2">
    <source>
        <dbReference type="SAM" id="MobiDB-lite"/>
    </source>
</evidence>
<name>RF1_SHESM</name>